<accession>Q2RJP8</accession>
<dbReference type="EC" id="2.1.1.74" evidence="1"/>
<dbReference type="EMBL" id="CP000232">
    <property type="protein sequence ID" value="ABC19341.1"/>
    <property type="molecule type" value="Genomic_DNA"/>
</dbReference>
<dbReference type="RefSeq" id="YP_429884.1">
    <property type="nucleotide sequence ID" value="NC_007644.1"/>
</dbReference>
<dbReference type="SMR" id="Q2RJP8"/>
<dbReference type="STRING" id="264732.Moth_1027"/>
<dbReference type="EnsemblBacteria" id="ABC19341">
    <property type="protein sequence ID" value="ABC19341"/>
    <property type="gene ID" value="Moth_1027"/>
</dbReference>
<dbReference type="KEGG" id="mta:Moth_1027"/>
<dbReference type="PATRIC" id="fig|264732.11.peg.1107"/>
<dbReference type="eggNOG" id="COG1206">
    <property type="taxonomic scope" value="Bacteria"/>
</dbReference>
<dbReference type="HOGENOM" id="CLU_033057_1_0_9"/>
<dbReference type="OrthoDB" id="9803114at2"/>
<dbReference type="GO" id="GO:0005829">
    <property type="term" value="C:cytosol"/>
    <property type="evidence" value="ECO:0007669"/>
    <property type="project" value="TreeGrafter"/>
</dbReference>
<dbReference type="GO" id="GO:0050660">
    <property type="term" value="F:flavin adenine dinucleotide binding"/>
    <property type="evidence" value="ECO:0007669"/>
    <property type="project" value="UniProtKB-UniRule"/>
</dbReference>
<dbReference type="GO" id="GO:0047151">
    <property type="term" value="F:tRNA (uracil(54)-C5)-methyltransferase activity, 5,10-methylenetetrahydrofolate-dependent"/>
    <property type="evidence" value="ECO:0007669"/>
    <property type="project" value="UniProtKB-UniRule"/>
</dbReference>
<dbReference type="GO" id="GO:0030488">
    <property type="term" value="P:tRNA methylation"/>
    <property type="evidence" value="ECO:0007669"/>
    <property type="project" value="TreeGrafter"/>
</dbReference>
<dbReference type="GO" id="GO:0002098">
    <property type="term" value="P:tRNA wobble uridine modification"/>
    <property type="evidence" value="ECO:0007669"/>
    <property type="project" value="TreeGrafter"/>
</dbReference>
<dbReference type="Gene3D" id="3.50.50.60">
    <property type="entry name" value="FAD/NAD(P)-binding domain"/>
    <property type="match status" value="2"/>
</dbReference>
<dbReference type="HAMAP" id="MF_01037">
    <property type="entry name" value="TrmFO"/>
    <property type="match status" value="1"/>
</dbReference>
<dbReference type="InterPro" id="IPR036188">
    <property type="entry name" value="FAD/NAD-bd_sf"/>
</dbReference>
<dbReference type="InterPro" id="IPR002218">
    <property type="entry name" value="MnmG-rel"/>
</dbReference>
<dbReference type="InterPro" id="IPR040131">
    <property type="entry name" value="MnmG_N"/>
</dbReference>
<dbReference type="InterPro" id="IPR004417">
    <property type="entry name" value="TrmFO"/>
</dbReference>
<dbReference type="NCBIfam" id="TIGR00137">
    <property type="entry name" value="gid_trmFO"/>
    <property type="match status" value="1"/>
</dbReference>
<dbReference type="NCBIfam" id="NF003739">
    <property type="entry name" value="PRK05335.1"/>
    <property type="match status" value="1"/>
</dbReference>
<dbReference type="PANTHER" id="PTHR11806">
    <property type="entry name" value="GLUCOSE INHIBITED DIVISION PROTEIN A"/>
    <property type="match status" value="1"/>
</dbReference>
<dbReference type="PANTHER" id="PTHR11806:SF2">
    <property type="entry name" value="METHYLENETETRAHYDROFOLATE--TRNA-(URACIL-5-)-METHYLTRANSFERASE TRMFO"/>
    <property type="match status" value="1"/>
</dbReference>
<dbReference type="Pfam" id="PF01134">
    <property type="entry name" value="GIDA"/>
    <property type="match status" value="1"/>
</dbReference>
<dbReference type="PRINTS" id="PR00411">
    <property type="entry name" value="PNDRDTASEI"/>
</dbReference>
<dbReference type="SUPFAM" id="SSF51905">
    <property type="entry name" value="FAD/NAD(P)-binding domain"/>
    <property type="match status" value="1"/>
</dbReference>
<reference key="1">
    <citation type="journal article" date="2008" name="Environ. Microbiol.">
        <title>The complete genome sequence of Moorella thermoacetica (f. Clostridium thermoaceticum).</title>
        <authorList>
            <person name="Pierce E."/>
            <person name="Xie G."/>
            <person name="Barabote R.D."/>
            <person name="Saunders E."/>
            <person name="Han C.S."/>
            <person name="Detter J.C."/>
            <person name="Richardson P."/>
            <person name="Brettin T.S."/>
            <person name="Das A."/>
            <person name="Ljungdahl L.G."/>
            <person name="Ragsdale S.W."/>
        </authorList>
    </citation>
    <scope>NUCLEOTIDE SEQUENCE [LARGE SCALE GENOMIC DNA]</scope>
    <source>
        <strain>ATCC 39073 / JCM 9320</strain>
    </source>
</reference>
<comment type="function">
    <text evidence="1">Catalyzes the folate-dependent formation of 5-methyl-uridine at position 54 (M-5-U54) in all tRNAs.</text>
</comment>
<comment type="catalytic activity">
    <reaction evidence="1">
        <text>uridine(54) in tRNA + (6R)-5,10-methylene-5,6,7,8-tetrahydrofolate + NADH + H(+) = 5-methyluridine(54) in tRNA + (6S)-5,6,7,8-tetrahydrofolate + NAD(+)</text>
        <dbReference type="Rhea" id="RHEA:16873"/>
        <dbReference type="Rhea" id="RHEA-COMP:10167"/>
        <dbReference type="Rhea" id="RHEA-COMP:10193"/>
        <dbReference type="ChEBI" id="CHEBI:15378"/>
        <dbReference type="ChEBI" id="CHEBI:15636"/>
        <dbReference type="ChEBI" id="CHEBI:57453"/>
        <dbReference type="ChEBI" id="CHEBI:57540"/>
        <dbReference type="ChEBI" id="CHEBI:57945"/>
        <dbReference type="ChEBI" id="CHEBI:65315"/>
        <dbReference type="ChEBI" id="CHEBI:74447"/>
        <dbReference type="EC" id="2.1.1.74"/>
    </reaction>
</comment>
<comment type="catalytic activity">
    <reaction evidence="1">
        <text>uridine(54) in tRNA + (6R)-5,10-methylene-5,6,7,8-tetrahydrofolate + NADPH + H(+) = 5-methyluridine(54) in tRNA + (6S)-5,6,7,8-tetrahydrofolate + NADP(+)</text>
        <dbReference type="Rhea" id="RHEA:62372"/>
        <dbReference type="Rhea" id="RHEA-COMP:10167"/>
        <dbReference type="Rhea" id="RHEA-COMP:10193"/>
        <dbReference type="ChEBI" id="CHEBI:15378"/>
        <dbReference type="ChEBI" id="CHEBI:15636"/>
        <dbReference type="ChEBI" id="CHEBI:57453"/>
        <dbReference type="ChEBI" id="CHEBI:57783"/>
        <dbReference type="ChEBI" id="CHEBI:58349"/>
        <dbReference type="ChEBI" id="CHEBI:65315"/>
        <dbReference type="ChEBI" id="CHEBI:74447"/>
        <dbReference type="EC" id="2.1.1.74"/>
    </reaction>
</comment>
<comment type="cofactor">
    <cofactor evidence="1">
        <name>FAD</name>
        <dbReference type="ChEBI" id="CHEBI:57692"/>
    </cofactor>
</comment>
<comment type="subcellular location">
    <subcellularLocation>
        <location evidence="1">Cytoplasm</location>
    </subcellularLocation>
</comment>
<comment type="similarity">
    <text evidence="1">Belongs to the MnmG family. TrmFO subfamily.</text>
</comment>
<name>TRMFO_MOOTA</name>
<feature type="chain" id="PRO_1000063921" description="Methylenetetrahydrofolate--tRNA-(uracil-5-)-methyltransferase TrmFO">
    <location>
        <begin position="1"/>
        <end position="437"/>
    </location>
</feature>
<feature type="binding site" evidence="1">
    <location>
        <begin position="9"/>
        <end position="14"/>
    </location>
    <ligand>
        <name>FAD</name>
        <dbReference type="ChEBI" id="CHEBI:57692"/>
    </ligand>
</feature>
<organism>
    <name type="scientific">Moorella thermoacetica (strain ATCC 39073 / JCM 9320)</name>
    <dbReference type="NCBI Taxonomy" id="264732"/>
    <lineage>
        <taxon>Bacteria</taxon>
        <taxon>Bacillati</taxon>
        <taxon>Bacillota</taxon>
        <taxon>Clostridia</taxon>
        <taxon>Moorellales</taxon>
        <taxon>Moorellaceae</taxon>
        <taxon>Moorella</taxon>
    </lineage>
</organism>
<sequence length="437" mass="48000">MSDKVIIIGGGLAGSEAAWQAARRGMKVELWEMRPGKLTPAHSTGYLAELVCSNSLRADSLENAAGLLKAEMRQAGSLIMEVAAACRVPAGKALAVDREEFASRVTAILEAHPGITVIREEVQAIPDNGPVIIATGPLTSPAMVRALKEFTGAEYLYFYDAAAPIVTAESLDYSRIFKGSRYGRGEDDYLNCPLNKEEYEAFYQALVTAERHPRHEFEPEVVFEGCMPVEVMAARGPDTLRFGPMRPVGLIDPATGREPYAVVQLRQDNAAGTLYNLVGFQTSLKWGEQERVFRLIPGLREAEFVRFGVMHRNTYVNSPRLLQPTLQVKGYPWLFLAGQLTGVEGYIESAACGLVAGVNATRFARGEEPLIPPPATAHGALLHYITDPTHTPFQPMHINYGLLPPLEHRVKNRVERNRILAARALEIWNSSGEFSGN</sequence>
<keyword id="KW-0963">Cytoplasm</keyword>
<keyword id="KW-0274">FAD</keyword>
<keyword id="KW-0285">Flavoprotein</keyword>
<keyword id="KW-0489">Methyltransferase</keyword>
<keyword id="KW-0520">NAD</keyword>
<keyword id="KW-0521">NADP</keyword>
<keyword id="KW-0808">Transferase</keyword>
<keyword id="KW-0819">tRNA processing</keyword>
<gene>
    <name evidence="1" type="primary">trmFO</name>
    <name type="synonym">gid</name>
    <name type="ordered locus">Moth_1027</name>
</gene>
<proteinExistence type="inferred from homology"/>
<protein>
    <recommendedName>
        <fullName evidence="1">Methylenetetrahydrofolate--tRNA-(uracil-5-)-methyltransferase TrmFO</fullName>
        <ecNumber evidence="1">2.1.1.74</ecNumber>
    </recommendedName>
    <alternativeName>
        <fullName evidence="1">Folate-dependent tRNA (uracil-5-)-methyltransferase</fullName>
    </alternativeName>
    <alternativeName>
        <fullName evidence="1">Folate-dependent tRNA(M-5-U54)-methyltransferase</fullName>
    </alternativeName>
</protein>
<evidence type="ECO:0000255" key="1">
    <source>
        <dbReference type="HAMAP-Rule" id="MF_01037"/>
    </source>
</evidence>